<protein>
    <recommendedName>
        <fullName evidence="1">Asparagine--tRNA ligase</fullName>
        <ecNumber evidence="1">6.1.1.22</ecNumber>
    </recommendedName>
    <alternativeName>
        <fullName evidence="1">Asparaginyl-tRNA synthetase</fullName>
        <shortName evidence="1">AsnRS</shortName>
    </alternativeName>
</protein>
<dbReference type="EC" id="6.1.1.22" evidence="1"/>
<dbReference type="EMBL" id="AE004092">
    <property type="protein sequence ID" value="AAK33614.1"/>
    <property type="molecule type" value="Genomic_DNA"/>
</dbReference>
<dbReference type="EMBL" id="CP000017">
    <property type="protein sequence ID" value="AAZ51156.1"/>
    <property type="molecule type" value="Genomic_DNA"/>
</dbReference>
<dbReference type="RefSeq" id="NP_268893.1">
    <property type="nucleotide sequence ID" value="NC_002737.2"/>
</dbReference>
<dbReference type="SMR" id="P67575"/>
<dbReference type="PaxDb" id="1314-HKU360_00548"/>
<dbReference type="KEGG" id="spy:SPy_0651"/>
<dbReference type="KEGG" id="spz:M5005_Spy0538"/>
<dbReference type="PATRIC" id="fig|160490.10.peg.553"/>
<dbReference type="HOGENOM" id="CLU_004553_2_0_9"/>
<dbReference type="OMA" id="PEMAFYD"/>
<dbReference type="Proteomes" id="UP000000750">
    <property type="component" value="Chromosome"/>
</dbReference>
<dbReference type="GO" id="GO:0005737">
    <property type="term" value="C:cytoplasm"/>
    <property type="evidence" value="ECO:0007669"/>
    <property type="project" value="UniProtKB-SubCell"/>
</dbReference>
<dbReference type="GO" id="GO:0004816">
    <property type="term" value="F:asparagine-tRNA ligase activity"/>
    <property type="evidence" value="ECO:0007669"/>
    <property type="project" value="UniProtKB-UniRule"/>
</dbReference>
<dbReference type="GO" id="GO:0005524">
    <property type="term" value="F:ATP binding"/>
    <property type="evidence" value="ECO:0007669"/>
    <property type="project" value="UniProtKB-UniRule"/>
</dbReference>
<dbReference type="GO" id="GO:0140096">
    <property type="term" value="F:catalytic activity, acting on a protein"/>
    <property type="evidence" value="ECO:0007669"/>
    <property type="project" value="UniProtKB-ARBA"/>
</dbReference>
<dbReference type="GO" id="GO:0003676">
    <property type="term" value="F:nucleic acid binding"/>
    <property type="evidence" value="ECO:0007669"/>
    <property type="project" value="InterPro"/>
</dbReference>
<dbReference type="GO" id="GO:0016740">
    <property type="term" value="F:transferase activity"/>
    <property type="evidence" value="ECO:0007669"/>
    <property type="project" value="UniProtKB-ARBA"/>
</dbReference>
<dbReference type="GO" id="GO:0006421">
    <property type="term" value="P:asparaginyl-tRNA aminoacylation"/>
    <property type="evidence" value="ECO:0007669"/>
    <property type="project" value="UniProtKB-UniRule"/>
</dbReference>
<dbReference type="CDD" id="cd04323">
    <property type="entry name" value="AsnRS_cyto_like_N"/>
    <property type="match status" value="1"/>
</dbReference>
<dbReference type="CDD" id="cd00776">
    <property type="entry name" value="AsxRS_core"/>
    <property type="match status" value="1"/>
</dbReference>
<dbReference type="Gene3D" id="3.30.930.10">
    <property type="entry name" value="Bira Bifunctional Protein, Domain 2"/>
    <property type="match status" value="1"/>
</dbReference>
<dbReference type="Gene3D" id="2.40.50.140">
    <property type="entry name" value="Nucleic acid-binding proteins"/>
    <property type="match status" value="1"/>
</dbReference>
<dbReference type="HAMAP" id="MF_00534">
    <property type="entry name" value="Asn_tRNA_synth"/>
    <property type="match status" value="1"/>
</dbReference>
<dbReference type="InterPro" id="IPR004364">
    <property type="entry name" value="Aa-tRNA-synt_II"/>
</dbReference>
<dbReference type="InterPro" id="IPR006195">
    <property type="entry name" value="aa-tRNA-synth_II"/>
</dbReference>
<dbReference type="InterPro" id="IPR045864">
    <property type="entry name" value="aa-tRNA-synth_II/BPL/LPL"/>
</dbReference>
<dbReference type="InterPro" id="IPR004522">
    <property type="entry name" value="Asn-tRNA-ligase"/>
</dbReference>
<dbReference type="InterPro" id="IPR002312">
    <property type="entry name" value="Asp/Asn-tRNA-synth_IIb"/>
</dbReference>
<dbReference type="InterPro" id="IPR012340">
    <property type="entry name" value="NA-bd_OB-fold"/>
</dbReference>
<dbReference type="InterPro" id="IPR004365">
    <property type="entry name" value="NA-bd_OB_tRNA"/>
</dbReference>
<dbReference type="NCBIfam" id="TIGR00457">
    <property type="entry name" value="asnS"/>
    <property type="match status" value="1"/>
</dbReference>
<dbReference type="NCBIfam" id="NF003037">
    <property type="entry name" value="PRK03932.1"/>
    <property type="match status" value="1"/>
</dbReference>
<dbReference type="PANTHER" id="PTHR22594:SF34">
    <property type="entry name" value="ASPARAGINE--TRNA LIGASE, MITOCHONDRIAL-RELATED"/>
    <property type="match status" value="1"/>
</dbReference>
<dbReference type="PANTHER" id="PTHR22594">
    <property type="entry name" value="ASPARTYL/LYSYL-TRNA SYNTHETASE"/>
    <property type="match status" value="1"/>
</dbReference>
<dbReference type="Pfam" id="PF00152">
    <property type="entry name" value="tRNA-synt_2"/>
    <property type="match status" value="1"/>
</dbReference>
<dbReference type="Pfam" id="PF01336">
    <property type="entry name" value="tRNA_anti-codon"/>
    <property type="match status" value="1"/>
</dbReference>
<dbReference type="PRINTS" id="PR01042">
    <property type="entry name" value="TRNASYNTHASP"/>
</dbReference>
<dbReference type="SUPFAM" id="SSF55681">
    <property type="entry name" value="Class II aaRS and biotin synthetases"/>
    <property type="match status" value="1"/>
</dbReference>
<dbReference type="SUPFAM" id="SSF50249">
    <property type="entry name" value="Nucleic acid-binding proteins"/>
    <property type="match status" value="1"/>
</dbReference>
<dbReference type="PROSITE" id="PS50862">
    <property type="entry name" value="AA_TRNA_LIGASE_II"/>
    <property type="match status" value="1"/>
</dbReference>
<accession>P67575</accession>
<accession>Q48ZR2</accession>
<accession>Q9A0R9</accession>
<evidence type="ECO:0000255" key="1">
    <source>
        <dbReference type="HAMAP-Rule" id="MF_00534"/>
    </source>
</evidence>
<reference key="1">
    <citation type="journal article" date="2001" name="Proc. Natl. Acad. Sci. U.S.A.">
        <title>Complete genome sequence of an M1 strain of Streptococcus pyogenes.</title>
        <authorList>
            <person name="Ferretti J.J."/>
            <person name="McShan W.M."/>
            <person name="Ajdic D.J."/>
            <person name="Savic D.J."/>
            <person name="Savic G."/>
            <person name="Lyon K."/>
            <person name="Primeaux C."/>
            <person name="Sezate S."/>
            <person name="Suvorov A.N."/>
            <person name="Kenton S."/>
            <person name="Lai H.S."/>
            <person name="Lin S.P."/>
            <person name="Qian Y."/>
            <person name="Jia H.G."/>
            <person name="Najar F.Z."/>
            <person name="Ren Q."/>
            <person name="Zhu H."/>
            <person name="Song L."/>
            <person name="White J."/>
            <person name="Yuan X."/>
            <person name="Clifton S.W."/>
            <person name="Roe B.A."/>
            <person name="McLaughlin R.E."/>
        </authorList>
    </citation>
    <scope>NUCLEOTIDE SEQUENCE [LARGE SCALE GENOMIC DNA]</scope>
    <source>
        <strain>ATCC 700294 / SF370 / Serotype M1</strain>
    </source>
</reference>
<reference key="2">
    <citation type="journal article" date="2005" name="J. Infect. Dis.">
        <title>Evolutionary origin and emergence of a highly successful clone of serotype M1 group A Streptococcus involved multiple horizontal gene transfer events.</title>
        <authorList>
            <person name="Sumby P."/>
            <person name="Porcella S.F."/>
            <person name="Madrigal A.G."/>
            <person name="Barbian K.D."/>
            <person name="Virtaneva K."/>
            <person name="Ricklefs S.M."/>
            <person name="Sturdevant D.E."/>
            <person name="Graham M.R."/>
            <person name="Vuopio-Varkila J."/>
            <person name="Hoe N.P."/>
            <person name="Musser J.M."/>
        </authorList>
    </citation>
    <scope>NUCLEOTIDE SEQUENCE [LARGE SCALE GENOMIC DNA]</scope>
    <source>
        <strain>ATCC BAA-947 / MGAS5005 / Serotype M1</strain>
    </source>
</reference>
<organism>
    <name type="scientific">Streptococcus pyogenes serotype M1</name>
    <dbReference type="NCBI Taxonomy" id="301447"/>
    <lineage>
        <taxon>Bacteria</taxon>
        <taxon>Bacillati</taxon>
        <taxon>Bacillota</taxon>
        <taxon>Bacilli</taxon>
        <taxon>Lactobacillales</taxon>
        <taxon>Streptococcaceae</taxon>
        <taxon>Streptococcus</taxon>
    </lineage>
</organism>
<name>SYN_STRP1</name>
<gene>
    <name evidence="1" type="primary">asnS</name>
    <name type="ordered locus">SPy_0651</name>
    <name type="ordered locus">M5005_Spy0538</name>
</gene>
<feature type="chain" id="PRO_0000176462" description="Asparagine--tRNA ligase">
    <location>
        <begin position="1"/>
        <end position="448"/>
    </location>
</feature>
<sequence length="448" mass="51208">MSKKLISIVDVKDYVGQEVTIGAWVANKSGKGKIAFVQLRDGSAFFQGVAFKPNFIEKYGEESGLEKFDVIKRLNQETSVYVTGIVKEDERSKFGYELDITDLEIIGESHEYPITPKEHGTDFLMDNRHLWLRSRKQMAVMQIRNAIIYATYEFFDQNGFIKFDSPILSENAAEDSTELFETDYFGKPAFLSQSGQLYLEAGAMALGRVFDFGPVFRAEKSKTRRHLTEFWMMDAEYSFLSHEESLDLQEAYVKALIQGVLDRAPQALDILERDVEALKRYITEPFKRVSYDDAITLLQEHEADEDTDYEHLEHGDDFGSPHETWISNYFGVPTFVVNYPASFKAFYMKPVPGNPERVLCADLLAPEGYGEIIGGSMREDNYDALVAKMDELGMDKSEYDFYLDLRKYGSVPHGGFGIGIERMVTFVAGTKHIREAIPFPRMLHRIRP</sequence>
<keyword id="KW-0030">Aminoacyl-tRNA synthetase</keyword>
<keyword id="KW-0067">ATP-binding</keyword>
<keyword id="KW-0963">Cytoplasm</keyword>
<keyword id="KW-0436">Ligase</keyword>
<keyword id="KW-0547">Nucleotide-binding</keyword>
<keyword id="KW-0648">Protein biosynthesis</keyword>
<keyword id="KW-1185">Reference proteome</keyword>
<proteinExistence type="inferred from homology"/>
<comment type="catalytic activity">
    <reaction evidence="1">
        <text>tRNA(Asn) + L-asparagine + ATP = L-asparaginyl-tRNA(Asn) + AMP + diphosphate + H(+)</text>
        <dbReference type="Rhea" id="RHEA:11180"/>
        <dbReference type="Rhea" id="RHEA-COMP:9659"/>
        <dbReference type="Rhea" id="RHEA-COMP:9674"/>
        <dbReference type="ChEBI" id="CHEBI:15378"/>
        <dbReference type="ChEBI" id="CHEBI:30616"/>
        <dbReference type="ChEBI" id="CHEBI:33019"/>
        <dbReference type="ChEBI" id="CHEBI:58048"/>
        <dbReference type="ChEBI" id="CHEBI:78442"/>
        <dbReference type="ChEBI" id="CHEBI:78515"/>
        <dbReference type="ChEBI" id="CHEBI:456215"/>
        <dbReference type="EC" id="6.1.1.22"/>
    </reaction>
</comment>
<comment type="subunit">
    <text evidence="1">Homodimer.</text>
</comment>
<comment type="subcellular location">
    <subcellularLocation>
        <location evidence="1">Cytoplasm</location>
    </subcellularLocation>
</comment>
<comment type="similarity">
    <text evidence="1">Belongs to the class-II aminoacyl-tRNA synthetase family.</text>
</comment>